<reference evidence="2" key="1">
    <citation type="journal article" date="2009" name="Peptides">
        <title>Peptide pal9a from the venom of the turrid snail Polystira albida from the Gulf of Mexico: purification, characterization, and comparison with P-conotoxin-like (framework IX) conoidean peptides.</title>
        <authorList>
            <person name="Aguilar M.B."/>
            <person name="de la Rosa R.A."/>
            <person name="Falcon A."/>
            <person name="Olivera B.M."/>
            <person name="Heimer de la Cotera E.P."/>
        </authorList>
    </citation>
    <scope>PROTEIN SEQUENCE</scope>
    <scope>SUBCELLULAR LOCATION</scope>
    <scope>TISSUE SPECIFICITY</scope>
    <scope>MASS SPECTROMETRY</scope>
    <scope>AMIDATION AT GLN-34</scope>
    <scope>DISULFIDE BONDS</scope>
    <source>
        <tissue evidence="1">Venom</tissue>
    </source>
</reference>
<accession>P86166</accession>
<organism>
    <name type="scientific">Polystira albida</name>
    <name type="common">White giant-turris</name>
    <name type="synonym">Pleurotoma albida</name>
    <dbReference type="NCBI Taxonomy" id="394106"/>
    <lineage>
        <taxon>Eukaryota</taxon>
        <taxon>Metazoa</taxon>
        <taxon>Spiralia</taxon>
        <taxon>Lophotrochozoa</taxon>
        <taxon>Mollusca</taxon>
        <taxon>Gastropoda</taxon>
        <taxon>Caenogastropoda</taxon>
        <taxon>Neogastropoda</taxon>
        <taxon>Conoidea</taxon>
        <taxon>Turridae</taxon>
        <taxon>Polystira</taxon>
    </lineage>
</organism>
<evidence type="ECO:0000269" key="1">
    <source>
    </source>
</evidence>
<evidence type="ECO:0000305" key="2"/>
<evidence type="ECO:0000305" key="3">
    <source>
    </source>
</evidence>
<protein>
    <recommendedName>
        <fullName>Turripeptide Pal9a</fullName>
    </recommendedName>
</protein>
<proteinExistence type="evidence at protein level"/>
<sequence length="34" mass="3689">NVCDGDACPDGVCRSGCTCDFNVAQRKDTCFYPQ</sequence>
<keyword id="KW-0027">Amidation</keyword>
<keyword id="KW-0903">Direct protein sequencing</keyword>
<keyword id="KW-1015">Disulfide bond</keyword>
<keyword id="KW-0964">Secreted</keyword>
<keyword id="KW-0800">Toxin</keyword>
<comment type="subcellular location">
    <subcellularLocation>
        <location evidence="1">Secreted</location>
    </subcellularLocation>
</comment>
<comment type="tissue specificity">
    <text evidence="1">Expressed by the venom duct.</text>
</comment>
<comment type="domain">
    <text>The cysteine framework is IX (C-C-C-C-C-C).</text>
</comment>
<comment type="mass spectrometry" mass="3678.84" method="MALDI" evidence="1"/>
<dbReference type="SMR" id="P86166"/>
<dbReference type="GO" id="GO:0005576">
    <property type="term" value="C:extracellular region"/>
    <property type="evidence" value="ECO:0000314"/>
    <property type="project" value="UniProtKB"/>
</dbReference>
<dbReference type="GO" id="GO:0090729">
    <property type="term" value="F:toxin activity"/>
    <property type="evidence" value="ECO:0007669"/>
    <property type="project" value="UniProtKB-KW"/>
</dbReference>
<feature type="peptide" id="PRO_0000364022" description="Turripeptide Pal9a">
    <location>
        <begin position="1"/>
        <end position="34"/>
    </location>
</feature>
<feature type="modified residue" description="Glutamine amide" evidence="1">
    <location>
        <position position="34"/>
    </location>
</feature>
<feature type="disulfide bond" evidence="3">
    <location>
        <begin position="3"/>
        <end position="17"/>
    </location>
</feature>
<feature type="disulfide bond" evidence="3">
    <location>
        <begin position="8"/>
        <end position="19"/>
    </location>
</feature>
<feature type="disulfide bond" evidence="3">
    <location>
        <begin position="13"/>
        <end position="30"/>
    </location>
</feature>
<name>VPL9A_POLAB</name>